<accession>P47394</accession>
<dbReference type="EMBL" id="L43967">
    <property type="protein sequence ID" value="AAC71366.1"/>
    <property type="molecule type" value="Genomic_DNA"/>
</dbReference>
<dbReference type="PIR" id="D64216">
    <property type="entry name" value="D64216"/>
</dbReference>
<dbReference type="RefSeq" id="WP_010869355.1">
    <property type="nucleotide sequence ID" value="NC_000908.2"/>
</dbReference>
<dbReference type="SMR" id="P47394"/>
<dbReference type="STRING" id="243273.MG_148"/>
<dbReference type="GeneID" id="88282280"/>
<dbReference type="KEGG" id="mge:MG_148"/>
<dbReference type="eggNOG" id="COG4487">
    <property type="taxonomic scope" value="Bacteria"/>
</dbReference>
<dbReference type="HOGENOM" id="CLU_034837_1_0_14"/>
<dbReference type="InParanoid" id="P47394"/>
<dbReference type="OrthoDB" id="3224137at2"/>
<dbReference type="BioCyc" id="MGEN243273:G1GJ2-171-MONOMER"/>
<dbReference type="Proteomes" id="UP000000807">
    <property type="component" value="Chromosome"/>
</dbReference>
<dbReference type="InterPro" id="IPR019219">
    <property type="entry name" value="DUF2130"/>
</dbReference>
<dbReference type="Pfam" id="PF09903">
    <property type="entry name" value="DUF2130"/>
    <property type="match status" value="1"/>
</dbReference>
<dbReference type="PIRSF" id="PIRSF005850">
    <property type="entry name" value="UCP005850"/>
    <property type="match status" value="1"/>
</dbReference>
<gene>
    <name type="ordered locus">MG148</name>
</gene>
<reference key="1">
    <citation type="journal article" date="1995" name="Science">
        <title>The minimal gene complement of Mycoplasma genitalium.</title>
        <authorList>
            <person name="Fraser C.M."/>
            <person name="Gocayne J.D."/>
            <person name="White O."/>
            <person name="Adams M.D."/>
            <person name="Clayton R.A."/>
            <person name="Fleischmann R.D."/>
            <person name="Bult C.J."/>
            <person name="Kerlavage A.R."/>
            <person name="Sutton G.G."/>
            <person name="Kelley J.M."/>
            <person name="Fritchman J.L."/>
            <person name="Weidman J.F."/>
            <person name="Small K.V."/>
            <person name="Sandusky M."/>
            <person name="Fuhrmann J.L."/>
            <person name="Nguyen D.T."/>
            <person name="Utterback T.R."/>
            <person name="Saudek D.M."/>
            <person name="Phillips C.A."/>
            <person name="Merrick J.M."/>
            <person name="Tomb J.-F."/>
            <person name="Dougherty B.A."/>
            <person name="Bott K.F."/>
            <person name="Hu P.-C."/>
            <person name="Lucier T.S."/>
            <person name="Peterson S.N."/>
            <person name="Smith H.O."/>
            <person name="Hutchison C.A. III"/>
            <person name="Venter J.C."/>
        </authorList>
    </citation>
    <scope>NUCLEOTIDE SEQUENCE [LARGE SCALE GENOMIC DNA]</scope>
    <source>
        <strain>ATCC 33530 / DSM 19775 / NCTC 10195 / G37</strain>
    </source>
</reference>
<organism>
    <name type="scientific">Mycoplasma genitalium (strain ATCC 33530 / DSM 19775 / NCTC 10195 / G37)</name>
    <name type="common">Mycoplasmoides genitalium</name>
    <dbReference type="NCBI Taxonomy" id="243273"/>
    <lineage>
        <taxon>Bacteria</taxon>
        <taxon>Bacillati</taxon>
        <taxon>Mycoplasmatota</taxon>
        <taxon>Mycoplasmoidales</taxon>
        <taxon>Mycoplasmoidaceae</taxon>
        <taxon>Mycoplasmoides</taxon>
    </lineage>
</organism>
<proteinExistence type="predicted"/>
<feature type="chain" id="PRO_0000210444" description="Uncharacterized protein MG148">
    <location>
        <begin position="1"/>
        <end position="409"/>
    </location>
</feature>
<protein>
    <recommendedName>
        <fullName>Uncharacterized protein MG148</fullName>
    </recommendedName>
</protein>
<keyword id="KW-1185">Reference proteome</keyword>
<name>Y148_MYCGE</name>
<sequence>MKYVKVQIINKSTIELLEDAKKGEKINLDLINQVDQTNILNTITTNQKLAWEKELSAQFINQQNELIKNFEIEIIKLKTMLNDKEQALLLKTKLELQNQFQKQIENYINEINKLKLTNKELEITNQKQLESSLKLQRNEFEEKINQQNLTIEKLKIQQARSSIWAVAKKGNELEKWCENQYESYADSFENCQFTRYKTEINLLDENDFPNEKADYIFSFFGEKTNKIPFLSICCEMKSEFNDSKHKSKNKDHISKLVRDAKRANCKYAFLISELELETENDIQVRLMPTLESGVEVYLVRPMFFILMLKLFYKLAKKLFALNRFQSVELIDKNKLNEQFKQLKDNFLTKTFLEIEKVCKSNLVDIETLEKAVVKLRVRNERVLDQLLNKWTKKIDSFDLQLTKKITNNY</sequence>